<feature type="chain" id="PRO_0000077129" description="Large ribosomal subunit protein uL3">
    <location>
        <begin position="1"/>
        <end position="209"/>
    </location>
</feature>
<proteinExistence type="inferred from homology"/>
<keyword id="KW-1185">Reference proteome</keyword>
<keyword id="KW-0687">Ribonucleoprotein</keyword>
<keyword id="KW-0689">Ribosomal protein</keyword>
<keyword id="KW-0694">RNA-binding</keyword>
<keyword id="KW-0699">rRNA-binding</keyword>
<protein>
    <recommendedName>
        <fullName evidence="1">Large ribosomal subunit protein uL3</fullName>
    </recommendedName>
    <alternativeName>
        <fullName evidence="2">50S ribosomal protein L3</fullName>
    </alternativeName>
</protein>
<organism>
    <name type="scientific">Oceanobacillus iheyensis (strain DSM 14371 / CIP 107618 / JCM 11309 / KCTC 3954 / HTE831)</name>
    <dbReference type="NCBI Taxonomy" id="221109"/>
    <lineage>
        <taxon>Bacteria</taxon>
        <taxon>Bacillati</taxon>
        <taxon>Bacillota</taxon>
        <taxon>Bacilli</taxon>
        <taxon>Bacillales</taxon>
        <taxon>Bacillaceae</taxon>
        <taxon>Oceanobacillus</taxon>
    </lineage>
</organism>
<evidence type="ECO:0000255" key="1">
    <source>
        <dbReference type="HAMAP-Rule" id="MF_01325"/>
    </source>
</evidence>
<evidence type="ECO:0000305" key="2"/>
<accession>Q8ETY2</accession>
<gene>
    <name evidence="1" type="primary">rplC</name>
    <name type="ordered locus">OB0119</name>
</gene>
<name>RL3_OCEIH</name>
<sequence>MTKGILGRKIGMTQLFSDNGELIPVTVIQAEPNVVLQKKTLENDGYEALQIGFADKKESRTNKAEKGHAEKAGTAPKRYVREIRGAEVNSFEVGQEIKVDIFESGEKIDVTGTSKGKGFQGVIKRHGQQRGPTTHGSHFHRAPGAMGVIDPMRVFKGKKLPGHMGSEQVTIQNLEVVSVDTDKNLLLIKGNVPGAKKSYVKITSAVKGN</sequence>
<comment type="function">
    <text evidence="1">One of the primary rRNA binding proteins, it binds directly near the 3'-end of the 23S rRNA, where it nucleates assembly of the 50S subunit.</text>
</comment>
<comment type="subunit">
    <text evidence="1">Part of the 50S ribosomal subunit. Forms a cluster with proteins L14 and L19.</text>
</comment>
<comment type="similarity">
    <text evidence="1">Belongs to the universal ribosomal protein uL3 family.</text>
</comment>
<reference key="1">
    <citation type="journal article" date="2002" name="Nucleic Acids Res.">
        <title>Genome sequence of Oceanobacillus iheyensis isolated from the Iheya Ridge and its unexpected adaptive capabilities to extreme environments.</title>
        <authorList>
            <person name="Takami H."/>
            <person name="Takaki Y."/>
            <person name="Uchiyama I."/>
        </authorList>
    </citation>
    <scope>NUCLEOTIDE SEQUENCE [LARGE SCALE GENOMIC DNA]</scope>
    <source>
        <strain>DSM 14371 / CIP 107618 / JCM 11309 / KCTC 3954 / HTE831</strain>
    </source>
</reference>
<dbReference type="EMBL" id="BA000028">
    <property type="protein sequence ID" value="BAC12075.1"/>
    <property type="molecule type" value="Genomic_DNA"/>
</dbReference>
<dbReference type="RefSeq" id="WP_011064522.1">
    <property type="nucleotide sequence ID" value="NC_004193.1"/>
</dbReference>
<dbReference type="SMR" id="Q8ETY2"/>
<dbReference type="STRING" id="221109.gene:10732309"/>
<dbReference type="KEGG" id="oih:OB0119"/>
<dbReference type="eggNOG" id="COG0087">
    <property type="taxonomic scope" value="Bacteria"/>
</dbReference>
<dbReference type="HOGENOM" id="CLU_044142_4_1_9"/>
<dbReference type="OrthoDB" id="9806135at2"/>
<dbReference type="PhylomeDB" id="Q8ETY2"/>
<dbReference type="Proteomes" id="UP000000822">
    <property type="component" value="Chromosome"/>
</dbReference>
<dbReference type="GO" id="GO:0022625">
    <property type="term" value="C:cytosolic large ribosomal subunit"/>
    <property type="evidence" value="ECO:0007669"/>
    <property type="project" value="TreeGrafter"/>
</dbReference>
<dbReference type="GO" id="GO:0019843">
    <property type="term" value="F:rRNA binding"/>
    <property type="evidence" value="ECO:0007669"/>
    <property type="project" value="UniProtKB-UniRule"/>
</dbReference>
<dbReference type="GO" id="GO:0003735">
    <property type="term" value="F:structural constituent of ribosome"/>
    <property type="evidence" value="ECO:0007669"/>
    <property type="project" value="InterPro"/>
</dbReference>
<dbReference type="GO" id="GO:0006412">
    <property type="term" value="P:translation"/>
    <property type="evidence" value="ECO:0007669"/>
    <property type="project" value="UniProtKB-UniRule"/>
</dbReference>
<dbReference type="FunFam" id="2.40.30.10:FF:000004">
    <property type="entry name" value="50S ribosomal protein L3"/>
    <property type="match status" value="1"/>
</dbReference>
<dbReference type="FunFam" id="3.30.160.810:FF:000002">
    <property type="entry name" value="50S ribosomal protein L3"/>
    <property type="match status" value="1"/>
</dbReference>
<dbReference type="Gene3D" id="3.30.160.810">
    <property type="match status" value="1"/>
</dbReference>
<dbReference type="Gene3D" id="2.40.30.10">
    <property type="entry name" value="Translation factors"/>
    <property type="match status" value="1"/>
</dbReference>
<dbReference type="HAMAP" id="MF_01325_B">
    <property type="entry name" value="Ribosomal_uL3_B"/>
    <property type="match status" value="1"/>
</dbReference>
<dbReference type="InterPro" id="IPR000597">
    <property type="entry name" value="Ribosomal_uL3"/>
</dbReference>
<dbReference type="InterPro" id="IPR019927">
    <property type="entry name" value="Ribosomal_uL3_bac/org-type"/>
</dbReference>
<dbReference type="InterPro" id="IPR019926">
    <property type="entry name" value="Ribosomal_uL3_CS"/>
</dbReference>
<dbReference type="InterPro" id="IPR009000">
    <property type="entry name" value="Transl_B-barrel_sf"/>
</dbReference>
<dbReference type="NCBIfam" id="TIGR03625">
    <property type="entry name" value="L3_bact"/>
    <property type="match status" value="1"/>
</dbReference>
<dbReference type="PANTHER" id="PTHR11229">
    <property type="entry name" value="50S RIBOSOMAL PROTEIN L3"/>
    <property type="match status" value="1"/>
</dbReference>
<dbReference type="PANTHER" id="PTHR11229:SF16">
    <property type="entry name" value="LARGE RIBOSOMAL SUBUNIT PROTEIN UL3C"/>
    <property type="match status" value="1"/>
</dbReference>
<dbReference type="Pfam" id="PF00297">
    <property type="entry name" value="Ribosomal_L3"/>
    <property type="match status" value="1"/>
</dbReference>
<dbReference type="SUPFAM" id="SSF50447">
    <property type="entry name" value="Translation proteins"/>
    <property type="match status" value="1"/>
</dbReference>
<dbReference type="PROSITE" id="PS00474">
    <property type="entry name" value="RIBOSOMAL_L3"/>
    <property type="match status" value="1"/>
</dbReference>